<organism>
    <name type="scientific">Danio rerio</name>
    <name type="common">Zebrafish</name>
    <name type="synonym">Brachydanio rerio</name>
    <dbReference type="NCBI Taxonomy" id="7955"/>
    <lineage>
        <taxon>Eukaryota</taxon>
        <taxon>Metazoa</taxon>
        <taxon>Chordata</taxon>
        <taxon>Craniata</taxon>
        <taxon>Vertebrata</taxon>
        <taxon>Euteleostomi</taxon>
        <taxon>Actinopterygii</taxon>
        <taxon>Neopterygii</taxon>
        <taxon>Teleostei</taxon>
        <taxon>Ostariophysi</taxon>
        <taxon>Cypriniformes</taxon>
        <taxon>Danionidae</taxon>
        <taxon>Danioninae</taxon>
        <taxon>Danio</taxon>
    </lineage>
</organism>
<reference key="1">
    <citation type="journal article" date="2013" name="Nature">
        <title>The zebrafish reference genome sequence and its relationship to the human genome.</title>
        <authorList>
            <person name="Howe K."/>
            <person name="Clark M.D."/>
            <person name="Torroja C.F."/>
            <person name="Torrance J."/>
            <person name="Berthelot C."/>
            <person name="Muffato M."/>
            <person name="Collins J.E."/>
            <person name="Humphray S."/>
            <person name="McLaren K."/>
            <person name="Matthews L."/>
            <person name="McLaren S."/>
            <person name="Sealy I."/>
            <person name="Caccamo M."/>
            <person name="Churcher C."/>
            <person name="Scott C."/>
            <person name="Barrett J.C."/>
            <person name="Koch R."/>
            <person name="Rauch G.J."/>
            <person name="White S."/>
            <person name="Chow W."/>
            <person name="Kilian B."/>
            <person name="Quintais L.T."/>
            <person name="Guerra-Assuncao J.A."/>
            <person name="Zhou Y."/>
            <person name="Gu Y."/>
            <person name="Yen J."/>
            <person name="Vogel J.H."/>
            <person name="Eyre T."/>
            <person name="Redmond S."/>
            <person name="Banerjee R."/>
            <person name="Chi J."/>
            <person name="Fu B."/>
            <person name="Langley E."/>
            <person name="Maguire S.F."/>
            <person name="Laird G.K."/>
            <person name="Lloyd D."/>
            <person name="Kenyon E."/>
            <person name="Donaldson S."/>
            <person name="Sehra H."/>
            <person name="Almeida-King J."/>
            <person name="Loveland J."/>
            <person name="Trevanion S."/>
            <person name="Jones M."/>
            <person name="Quail M."/>
            <person name="Willey D."/>
            <person name="Hunt A."/>
            <person name="Burton J."/>
            <person name="Sims S."/>
            <person name="McLay K."/>
            <person name="Plumb B."/>
            <person name="Davis J."/>
            <person name="Clee C."/>
            <person name="Oliver K."/>
            <person name="Clark R."/>
            <person name="Riddle C."/>
            <person name="Elliot D."/>
            <person name="Threadgold G."/>
            <person name="Harden G."/>
            <person name="Ware D."/>
            <person name="Begum S."/>
            <person name="Mortimore B."/>
            <person name="Kerry G."/>
            <person name="Heath P."/>
            <person name="Phillimore B."/>
            <person name="Tracey A."/>
            <person name="Corby N."/>
            <person name="Dunn M."/>
            <person name="Johnson C."/>
            <person name="Wood J."/>
            <person name="Clark S."/>
            <person name="Pelan S."/>
            <person name="Griffiths G."/>
            <person name="Smith M."/>
            <person name="Glithero R."/>
            <person name="Howden P."/>
            <person name="Barker N."/>
            <person name="Lloyd C."/>
            <person name="Stevens C."/>
            <person name="Harley J."/>
            <person name="Holt K."/>
            <person name="Panagiotidis G."/>
            <person name="Lovell J."/>
            <person name="Beasley H."/>
            <person name="Henderson C."/>
            <person name="Gordon D."/>
            <person name="Auger K."/>
            <person name="Wright D."/>
            <person name="Collins J."/>
            <person name="Raisen C."/>
            <person name="Dyer L."/>
            <person name="Leung K."/>
            <person name="Robertson L."/>
            <person name="Ambridge K."/>
            <person name="Leongamornlert D."/>
            <person name="McGuire S."/>
            <person name="Gilderthorp R."/>
            <person name="Griffiths C."/>
            <person name="Manthravadi D."/>
            <person name="Nichol S."/>
            <person name="Barker G."/>
            <person name="Whitehead S."/>
            <person name="Kay M."/>
            <person name="Brown J."/>
            <person name="Murnane C."/>
            <person name="Gray E."/>
            <person name="Humphries M."/>
            <person name="Sycamore N."/>
            <person name="Barker D."/>
            <person name="Saunders D."/>
            <person name="Wallis J."/>
            <person name="Babbage A."/>
            <person name="Hammond S."/>
            <person name="Mashreghi-Mohammadi M."/>
            <person name="Barr L."/>
            <person name="Martin S."/>
            <person name="Wray P."/>
            <person name="Ellington A."/>
            <person name="Matthews N."/>
            <person name="Ellwood M."/>
            <person name="Woodmansey R."/>
            <person name="Clark G."/>
            <person name="Cooper J."/>
            <person name="Tromans A."/>
            <person name="Grafham D."/>
            <person name="Skuce C."/>
            <person name="Pandian R."/>
            <person name="Andrews R."/>
            <person name="Harrison E."/>
            <person name="Kimberley A."/>
            <person name="Garnett J."/>
            <person name="Fosker N."/>
            <person name="Hall R."/>
            <person name="Garner P."/>
            <person name="Kelly D."/>
            <person name="Bird C."/>
            <person name="Palmer S."/>
            <person name="Gehring I."/>
            <person name="Berger A."/>
            <person name="Dooley C.M."/>
            <person name="Ersan-Urun Z."/>
            <person name="Eser C."/>
            <person name="Geiger H."/>
            <person name="Geisler M."/>
            <person name="Karotki L."/>
            <person name="Kirn A."/>
            <person name="Konantz J."/>
            <person name="Konantz M."/>
            <person name="Oberlander M."/>
            <person name="Rudolph-Geiger S."/>
            <person name="Teucke M."/>
            <person name="Lanz C."/>
            <person name="Raddatz G."/>
            <person name="Osoegawa K."/>
            <person name="Zhu B."/>
            <person name="Rapp A."/>
            <person name="Widaa S."/>
            <person name="Langford C."/>
            <person name="Yang F."/>
            <person name="Schuster S.C."/>
            <person name="Carter N.P."/>
            <person name="Harrow J."/>
            <person name="Ning Z."/>
            <person name="Herrero J."/>
            <person name="Searle S.M."/>
            <person name="Enright A."/>
            <person name="Geisler R."/>
            <person name="Plasterk R.H."/>
            <person name="Lee C."/>
            <person name="Westerfield M."/>
            <person name="de Jong P.J."/>
            <person name="Zon L.I."/>
            <person name="Postlethwait J.H."/>
            <person name="Nusslein-Volhard C."/>
            <person name="Hubbard T.J."/>
            <person name="Roest Crollius H."/>
            <person name="Rogers J."/>
            <person name="Stemple D.L."/>
        </authorList>
    </citation>
    <scope>NUCLEOTIDE SEQUENCE [LARGE SCALE GENOMIC DNA]</scope>
    <source>
        <strain>Tuebingen</strain>
    </source>
</reference>
<protein>
    <recommendedName>
        <fullName evidence="2">Vesicular glutamate transporter 3</fullName>
        <shortName evidence="2">VGluT3</shortName>
    </recommendedName>
    <alternativeName>
        <fullName>Solute carrier family 17 member 8</fullName>
    </alternativeName>
</protein>
<feature type="chain" id="PRO_0000331617" description="Vesicular glutamate transporter 3">
    <location>
        <begin position="1"/>
        <end position="590"/>
    </location>
</feature>
<feature type="topological domain" description="Cytoplasmic" evidence="3">
    <location>
        <begin position="1"/>
        <end position="76"/>
    </location>
</feature>
<feature type="transmembrane region" description="Helical" evidence="3">
    <location>
        <begin position="77"/>
        <end position="97"/>
    </location>
</feature>
<feature type="topological domain" description="Vesicular" evidence="3">
    <location>
        <begin position="98"/>
        <end position="130"/>
    </location>
</feature>
<feature type="transmembrane region" description="Helical" evidence="3">
    <location>
        <begin position="131"/>
        <end position="151"/>
    </location>
</feature>
<feature type="topological domain" description="Cytoplasmic" evidence="3">
    <location>
        <begin position="152"/>
        <end position="153"/>
    </location>
</feature>
<feature type="transmembrane region" description="Helical" evidence="3">
    <location>
        <begin position="154"/>
        <end position="174"/>
    </location>
</feature>
<feature type="topological domain" description="Vesicular" evidence="3">
    <location>
        <begin position="175"/>
        <end position="182"/>
    </location>
</feature>
<feature type="transmembrane region" description="Helical" evidence="3">
    <location>
        <begin position="183"/>
        <end position="203"/>
    </location>
</feature>
<feature type="topological domain" description="Cytoplasmic" evidence="3">
    <location>
        <begin position="204"/>
        <end position="221"/>
    </location>
</feature>
<feature type="transmembrane region" description="Helical" evidence="3">
    <location>
        <begin position="222"/>
        <end position="242"/>
    </location>
</feature>
<feature type="topological domain" description="Vesicular" evidence="3">
    <location>
        <begin position="243"/>
        <end position="249"/>
    </location>
</feature>
<feature type="transmembrane region" description="Helical" evidence="3">
    <location>
        <begin position="250"/>
        <end position="270"/>
    </location>
</feature>
<feature type="topological domain" description="Cytoplasmic" evidence="3">
    <location>
        <begin position="271"/>
        <end position="315"/>
    </location>
</feature>
<feature type="transmembrane region" description="Helical" evidence="3">
    <location>
        <begin position="316"/>
        <end position="336"/>
    </location>
</feature>
<feature type="topological domain" description="Vesicular" evidence="3">
    <location>
        <begin position="337"/>
        <end position="354"/>
    </location>
</feature>
<feature type="transmembrane region" description="Helical" evidence="3">
    <location>
        <begin position="355"/>
        <end position="375"/>
    </location>
</feature>
<feature type="topological domain" description="Cytoplasmic" evidence="3">
    <location>
        <begin position="376"/>
        <end position="391"/>
    </location>
</feature>
<feature type="transmembrane region" description="Helical" evidence="3">
    <location>
        <begin position="392"/>
        <end position="412"/>
    </location>
</feature>
<feature type="topological domain" description="Vesicular" evidence="3">
    <location>
        <begin position="413"/>
        <end position="414"/>
    </location>
</feature>
<feature type="transmembrane region" description="Helical" evidence="3">
    <location>
        <begin position="415"/>
        <end position="435"/>
    </location>
</feature>
<feature type="topological domain" description="Cytoplasmic" evidence="3">
    <location>
        <begin position="436"/>
        <end position="448"/>
    </location>
</feature>
<feature type="transmembrane region" description="Helical" evidence="3">
    <location>
        <begin position="449"/>
        <end position="469"/>
    </location>
</feature>
<feature type="topological domain" description="Vesicular" evidence="3">
    <location>
        <begin position="470"/>
        <end position="482"/>
    </location>
</feature>
<feature type="transmembrane region" description="Helical" evidence="3">
    <location>
        <begin position="483"/>
        <end position="503"/>
    </location>
</feature>
<feature type="topological domain" description="Cytoplasmic" evidence="3">
    <location>
        <begin position="504"/>
        <end position="587"/>
    </location>
</feature>
<feature type="region of interest" description="Disordered" evidence="4">
    <location>
        <begin position="526"/>
        <end position="590"/>
    </location>
</feature>
<feature type="compositionally biased region" description="Acidic residues" evidence="4">
    <location>
        <begin position="526"/>
        <end position="535"/>
    </location>
</feature>
<feature type="compositionally biased region" description="Polar residues" evidence="4">
    <location>
        <begin position="536"/>
        <end position="557"/>
    </location>
</feature>
<feature type="glycosylation site" description="N-linked (GlcNAc...) asparagine" evidence="3">
    <location>
        <position position="106"/>
    </location>
</feature>
<feature type="glycosylation site" description="N-linked (GlcNAc...) asparagine" evidence="3">
    <location>
        <position position="112"/>
    </location>
</feature>
<sequence length="590" mass="64815">MPLGGFAGLKEKLNPGKEELKNNVGDSLGNLQKKIDGSNVTEEDNIELTEDGRPVAAPKRSPPLLDCGCFGLPKRYIIAMLSGLGFCISFGIRCNLGVAIVEMVNNNTVYINGTAVMQPAQFNWDPETVGLIHGSFFWGYIVTQIPGGFISNKLAANRVFGAAIFLTSVLNMFIPSAARVHYGCVMFVRILQGLVEGVTYPACHGMWSKWAPPLERSRLATTSFCGSYAGAVIAMPLAGILVQYVGWPSVFYIYGVFGIIWYIFWILLAYNSPAVHPTISEEERNYIETSIGEGANLMSSTEKFKTPWREFFTSMPVYAIIVANFCRSWTFYLLLISQPAYFEEVFGFPISKVGILSAVPHMVMTIIVPIGGQLADFLRSRKILSTTTVRKIMNCGGFGMEATLLLVVGFSHTRAVAISFLILAVGFSGFAISGFNVNHLDIAPRYASILMGISNGVGTLSGMVCPLIVGALTKHKTRLEWQHVFVIASMVHYTGVIFYAIFASGEKQDWADPENTSDEKCGIIGEDELADETEPSSDSGLATRQKTYGTTDNSSGRKQGWKKKRGVTMQAEDDHESNHYENGEYQTQYQ</sequence>
<evidence type="ECO:0000250" key="1">
    <source>
        <dbReference type="UniProtKB" id="Q7TSF2"/>
    </source>
</evidence>
<evidence type="ECO:0000250" key="2">
    <source>
        <dbReference type="UniProtKB" id="Q8NDX2"/>
    </source>
</evidence>
<evidence type="ECO:0000255" key="3"/>
<evidence type="ECO:0000256" key="4">
    <source>
        <dbReference type="SAM" id="MobiDB-lite"/>
    </source>
</evidence>
<evidence type="ECO:0000305" key="5"/>
<keyword id="KW-1003">Cell membrane</keyword>
<keyword id="KW-0868">Chloride</keyword>
<keyword id="KW-0869">Chloride channel</keyword>
<keyword id="KW-0968">Cytoplasmic vesicle</keyword>
<keyword id="KW-0325">Glycoprotein</keyword>
<keyword id="KW-0407">Ion channel</keyword>
<keyword id="KW-0406">Ion transport</keyword>
<keyword id="KW-0472">Membrane</keyword>
<keyword id="KW-0532">Neurotransmitter transport</keyword>
<keyword id="KW-0592">Phosphate transport</keyword>
<keyword id="KW-1185">Reference proteome</keyword>
<keyword id="KW-0915">Sodium</keyword>
<keyword id="KW-0739">Sodium transport</keyword>
<keyword id="KW-0769">Symport</keyword>
<keyword id="KW-0770">Synapse</keyword>
<keyword id="KW-0771">Synaptosome</keyword>
<keyword id="KW-0812">Transmembrane</keyword>
<keyword id="KW-1133">Transmembrane helix</keyword>
<keyword id="KW-0813">Transport</keyword>
<proteinExistence type="inferred from homology"/>
<dbReference type="EMBL" id="CR536616">
    <property type="protein sequence ID" value="CAK04857.2"/>
    <property type="molecule type" value="Genomic_DNA"/>
</dbReference>
<dbReference type="RefSeq" id="NP_001076304.1">
    <property type="nucleotide sequence ID" value="NM_001082835.1"/>
</dbReference>
<dbReference type="SMR" id="Q1L8X9"/>
<dbReference type="FunCoup" id="Q1L8X9">
    <property type="interactions" value="317"/>
</dbReference>
<dbReference type="STRING" id="7955.ENSDARP00000074903"/>
<dbReference type="GlyCosmos" id="Q1L8X9">
    <property type="glycosylation" value="2 sites, No reported glycans"/>
</dbReference>
<dbReference type="PaxDb" id="7955-ENSDARP00000074903"/>
<dbReference type="Ensembl" id="ENSDART00000080454">
    <property type="protein sequence ID" value="ENSDARP00000074903"/>
    <property type="gene ID" value="ENSDARG00000057728"/>
</dbReference>
<dbReference type="GeneID" id="563467"/>
<dbReference type="KEGG" id="dre:563467"/>
<dbReference type="AGR" id="ZFIN:ZDB-GENE-060503-416"/>
<dbReference type="CTD" id="246213"/>
<dbReference type="ZFIN" id="ZDB-GENE-060503-416">
    <property type="gene designation" value="slc17a8"/>
</dbReference>
<dbReference type="eggNOG" id="KOG2532">
    <property type="taxonomic scope" value="Eukaryota"/>
</dbReference>
<dbReference type="HOGENOM" id="CLU_001265_5_0_1"/>
<dbReference type="InParanoid" id="Q1L8X9"/>
<dbReference type="OMA" id="ADETEHN"/>
<dbReference type="OrthoDB" id="2985014at2759"/>
<dbReference type="PhylomeDB" id="Q1L8X9"/>
<dbReference type="TreeFam" id="TF313535"/>
<dbReference type="Reactome" id="R-DRE-428643">
    <property type="pathway name" value="Organic anion transporters"/>
</dbReference>
<dbReference type="PRO" id="PR:Q1L8X9"/>
<dbReference type="Proteomes" id="UP000000437">
    <property type="component" value="Alternate scaffold 18"/>
</dbReference>
<dbReference type="Proteomes" id="UP000000437">
    <property type="component" value="Chromosome 18"/>
</dbReference>
<dbReference type="Bgee" id="ENSDARG00000057728">
    <property type="expression patterns" value="Expressed in ovary and 2 other cell types or tissues"/>
</dbReference>
<dbReference type="GO" id="GO:0034707">
    <property type="term" value="C:chloride channel complex"/>
    <property type="evidence" value="ECO:0007669"/>
    <property type="project" value="UniProtKB-KW"/>
</dbReference>
<dbReference type="GO" id="GO:0060076">
    <property type="term" value="C:excitatory synapse"/>
    <property type="evidence" value="ECO:0000318"/>
    <property type="project" value="GO_Central"/>
</dbReference>
<dbReference type="GO" id="GO:0043005">
    <property type="term" value="C:neuron projection"/>
    <property type="evidence" value="ECO:0007669"/>
    <property type="project" value="UniProtKB-KW"/>
</dbReference>
<dbReference type="GO" id="GO:0005886">
    <property type="term" value="C:plasma membrane"/>
    <property type="evidence" value="ECO:0007669"/>
    <property type="project" value="UniProtKB-SubCell"/>
</dbReference>
<dbReference type="GO" id="GO:0030672">
    <property type="term" value="C:synaptic vesicle membrane"/>
    <property type="evidence" value="ECO:0000318"/>
    <property type="project" value="GO_Central"/>
</dbReference>
<dbReference type="GO" id="GO:0005254">
    <property type="term" value="F:chloride channel activity"/>
    <property type="evidence" value="ECO:0000250"/>
    <property type="project" value="UniProtKB"/>
</dbReference>
<dbReference type="GO" id="GO:0005313">
    <property type="term" value="F:L-glutamate transmembrane transporter activity"/>
    <property type="evidence" value="ECO:0000318"/>
    <property type="project" value="GO_Central"/>
</dbReference>
<dbReference type="GO" id="GO:0140788">
    <property type="term" value="F:L-glutamate uniporter activity"/>
    <property type="evidence" value="ECO:0000250"/>
    <property type="project" value="UniProtKB"/>
</dbReference>
<dbReference type="GO" id="GO:0005326">
    <property type="term" value="F:neurotransmitter transmembrane transporter activity"/>
    <property type="evidence" value="ECO:0000318"/>
    <property type="project" value="GO_Central"/>
</dbReference>
<dbReference type="GO" id="GO:0005436">
    <property type="term" value="F:sodium:phosphate symporter activity"/>
    <property type="evidence" value="ECO:0000250"/>
    <property type="project" value="UniProtKB"/>
</dbReference>
<dbReference type="GO" id="GO:0050957">
    <property type="term" value="P:equilibrioception"/>
    <property type="evidence" value="ECO:0000315"/>
    <property type="project" value="ZFIN"/>
</dbReference>
<dbReference type="GO" id="GO:0051938">
    <property type="term" value="P:L-glutamate import"/>
    <property type="evidence" value="ECO:0000250"/>
    <property type="project" value="UniProtKB"/>
</dbReference>
<dbReference type="GO" id="GO:0015813">
    <property type="term" value="P:L-glutamate transmembrane transport"/>
    <property type="evidence" value="ECO:0000250"/>
    <property type="project" value="UniProtKB"/>
</dbReference>
<dbReference type="GO" id="GO:0098700">
    <property type="term" value="P:neurotransmitter loading into synaptic vesicle"/>
    <property type="evidence" value="ECO:0000318"/>
    <property type="project" value="GO_Central"/>
</dbReference>
<dbReference type="GO" id="GO:0055062">
    <property type="term" value="P:phosphate ion homeostasis"/>
    <property type="evidence" value="ECO:0000250"/>
    <property type="project" value="UniProtKB"/>
</dbReference>
<dbReference type="GO" id="GO:0051951">
    <property type="term" value="P:positive regulation of glutamate uptake involved in transmission of nerve impulse"/>
    <property type="evidence" value="ECO:0000250"/>
    <property type="project" value="UniProtKB"/>
</dbReference>
<dbReference type="GO" id="GO:0051631">
    <property type="term" value="P:regulation of acetylcholine uptake"/>
    <property type="evidence" value="ECO:0000250"/>
    <property type="project" value="UniProtKB"/>
</dbReference>
<dbReference type="GO" id="GO:0050803">
    <property type="term" value="P:regulation of synapse structure or activity"/>
    <property type="evidence" value="ECO:0000315"/>
    <property type="project" value="ZFIN"/>
</dbReference>
<dbReference type="GO" id="GO:0044341">
    <property type="term" value="P:sodium-dependent phosphate transport"/>
    <property type="evidence" value="ECO:0000250"/>
    <property type="project" value="UniProtKB"/>
</dbReference>
<dbReference type="GO" id="GO:0035249">
    <property type="term" value="P:synaptic transmission, glutamatergic"/>
    <property type="evidence" value="ECO:0000318"/>
    <property type="project" value="GO_Central"/>
</dbReference>
<dbReference type="GO" id="GO:0060005">
    <property type="term" value="P:vestibular reflex"/>
    <property type="evidence" value="ECO:0000315"/>
    <property type="project" value="ZFIN"/>
</dbReference>
<dbReference type="CDD" id="cd17382">
    <property type="entry name" value="MFS_SLC17A6_7_8_VGluT"/>
    <property type="match status" value="1"/>
</dbReference>
<dbReference type="FunFam" id="1.20.1250.20:FF:000004">
    <property type="entry name" value="vesicular glutamate transporter 2 isoform X1"/>
    <property type="match status" value="1"/>
</dbReference>
<dbReference type="FunFam" id="1.20.1250.20:FF:000005">
    <property type="entry name" value="vesicular glutamate transporter 2 isoform X1"/>
    <property type="match status" value="1"/>
</dbReference>
<dbReference type="Gene3D" id="1.20.1250.20">
    <property type="entry name" value="MFS general substrate transporter like domains"/>
    <property type="match status" value="2"/>
</dbReference>
<dbReference type="InterPro" id="IPR011701">
    <property type="entry name" value="MFS"/>
</dbReference>
<dbReference type="InterPro" id="IPR020846">
    <property type="entry name" value="MFS_dom"/>
</dbReference>
<dbReference type="InterPro" id="IPR050382">
    <property type="entry name" value="MFS_Na/Anion_cotransporter"/>
</dbReference>
<dbReference type="InterPro" id="IPR036259">
    <property type="entry name" value="MFS_trans_sf"/>
</dbReference>
<dbReference type="PANTHER" id="PTHR11662">
    <property type="entry name" value="SOLUTE CARRIER FAMILY 17"/>
    <property type="match status" value="1"/>
</dbReference>
<dbReference type="PANTHER" id="PTHR11662:SF207">
    <property type="entry name" value="VESICULAR GLUTAMATE TRANSPORTER 3"/>
    <property type="match status" value="1"/>
</dbReference>
<dbReference type="Pfam" id="PF07690">
    <property type="entry name" value="MFS_1"/>
    <property type="match status" value="1"/>
</dbReference>
<dbReference type="SUPFAM" id="SSF103473">
    <property type="entry name" value="MFS general substrate transporter"/>
    <property type="match status" value="1"/>
</dbReference>
<dbReference type="PROSITE" id="PS50850">
    <property type="entry name" value="MFS"/>
    <property type="match status" value="1"/>
</dbReference>
<gene>
    <name evidence="2" type="primary">slc17a8</name>
    <name type="synonym">vglut3</name>
    <name type="ORF">si:ch211-264e16.4</name>
</gene>
<name>VGLU3_DANRE</name>
<accession>Q1L8X9</accession>
<comment type="function">
    <text evidence="1 2">Multifunctional transporter that transports L-glutamate as well as multiple ions such as chloride, sodium and phosphate. At the synaptic vesicle membrane, mainly functions as an uniporter that mediates the uptake of L-glutamate into synaptic vesicles at presynaptic nerve terminals of excitatory neural cells. The L-glutamate uniporter activity is electrogenic and is driven by the proton electrochemical gradient, mainly by the electrical gradient established by the vacuolar H(+)-ATPase across the synaptic vesicle membrane (By similarity). In addition, functions as a chloride channel that allows a chloride permeation through the synaptic vesicle membrane that affects the proton electrochemical gradient and promotes synaptic vesicles acidification (By similarity). At the plasma membrane, following exocytosis, functions as a symporter of Na(+) and phosphate from the extracellular space to the cytoplasm allowing synaptic phosphate homeostasis regulation. The symporter activity is electrogenic (By similarity). Moreover, operates synergistically with SLC18A3/VACHT under a constant H(+) gradient, thereby allowing striatal vesicular acetylcholine uptake (By similarity).</text>
</comment>
<comment type="catalytic activity">
    <reaction evidence="2">
        <text>L-glutamate(out) = L-glutamate(in)</text>
        <dbReference type="Rhea" id="RHEA:66336"/>
        <dbReference type="ChEBI" id="CHEBI:29985"/>
    </reaction>
</comment>
<comment type="catalytic activity">
    <reaction evidence="2">
        <text>3 Na(+)(out) + phosphate(out) = 3 Na(+)(in) + phosphate(in)</text>
        <dbReference type="Rhea" id="RHEA:71255"/>
        <dbReference type="ChEBI" id="CHEBI:29101"/>
        <dbReference type="ChEBI" id="CHEBI:43474"/>
    </reaction>
</comment>
<comment type="catalytic activity">
    <reaction evidence="1">
        <text>chloride(in) = chloride(out)</text>
        <dbReference type="Rhea" id="RHEA:29823"/>
        <dbReference type="ChEBI" id="CHEBI:17996"/>
    </reaction>
</comment>
<comment type="activity regulation">
    <text evidence="1">The L-glutamate uniporter activity exhibits a biphasic dependence on chloride concentration. Chloride channel activity is allosterically activated by lumenal H(+) and Cl(-) leading to synaptic vesicles acidification. The glutamate transport activity is allosterically activated by lumenal H(+) and Cl(-), preventing non-vesicular L-glutamate release.</text>
</comment>
<comment type="subcellular location">
    <subcellularLocation>
        <location evidence="1">Cytoplasmic vesicle</location>
        <location evidence="1">Secretory vesicle</location>
        <location evidence="1">Synaptic vesicle membrane</location>
    </subcellularLocation>
    <subcellularLocation>
        <location evidence="2">Cell membrane</location>
        <topology evidence="2">Multi-pass membrane protein</topology>
    </subcellularLocation>
    <subcellularLocation>
        <location evidence="1">Synapse</location>
        <location evidence="1">Synaptosome</location>
    </subcellularLocation>
</comment>
<comment type="similarity">
    <text evidence="5">Belongs to the major facilitator superfamily. Sodium/anion cotransporter family. VGLUT subfamily.</text>
</comment>